<reference key="1">
    <citation type="journal article" date="1997" name="Eur. J. Biochem.">
        <title>cDNA cloning of a Trichoderma reesei cellulase and demonstration of endoglucanase activity by expression in yeast.</title>
        <authorList>
            <person name="Saloheimo M."/>
            <person name="Nakari-Setaelae T."/>
            <person name="Tenkanen M."/>
            <person name="Penttilae M."/>
        </authorList>
    </citation>
    <scope>NUCLEOTIDE SEQUENCE [MRNA]</scope>
    <scope>CATALYTIC ACTIVITY</scope>
    <scope>INDUCTION</scope>
    <scope>DOMAIN</scope>
    <source>
        <strain>ATCC 56765 / Rut C-30</strain>
    </source>
</reference>
<reference key="2">
    <citation type="journal article" date="2001" name="Eur. J. Biochem.">
        <title>Homologous expression and characterization of Cel61A (EG IV) of Trichoderma reesei.</title>
        <authorList>
            <person name="Karlsson J."/>
            <person name="Saloheimo M."/>
            <person name="Siika-aho M."/>
            <person name="Tenkanen M."/>
            <person name="Penttilae M."/>
            <person name="Tjerneld F."/>
        </authorList>
    </citation>
    <scope>FUNCTION</scope>
    <scope>CATALYTIC ACTIVITY</scope>
</reference>
<reference key="3">
    <citation type="journal article" date="2003" name="J. Biol. Chem.">
        <title>Transcriptional regulation of biomass-degrading enzymes in the filamentous fungus Trichoderma reesei.</title>
        <authorList>
            <person name="Foreman P.K."/>
            <person name="Brown D."/>
            <person name="Dankmeyer L."/>
            <person name="Dean R."/>
            <person name="Diener S."/>
            <person name="Dunn-Coleman N.S."/>
            <person name="Goedegebuur F."/>
            <person name="Houfek T.D."/>
            <person name="England G.J."/>
            <person name="Kelley A.S."/>
            <person name="Meerman H.J."/>
            <person name="Mitchell T."/>
            <person name="Mitchinson C."/>
            <person name="Olivares H.A."/>
            <person name="Teunissen P.J.M."/>
            <person name="Yao J."/>
            <person name="Ward M."/>
        </authorList>
    </citation>
    <scope>INDUCTION</scope>
</reference>
<gene>
    <name evidence="10" type="primary">cel61a</name>
    <name evidence="11" type="synonym">egl4</name>
</gene>
<organism>
    <name type="scientific">Hypocrea jecorina</name>
    <name type="common">Trichoderma reesei</name>
    <dbReference type="NCBI Taxonomy" id="51453"/>
    <lineage>
        <taxon>Eukaryota</taxon>
        <taxon>Fungi</taxon>
        <taxon>Dikarya</taxon>
        <taxon>Ascomycota</taxon>
        <taxon>Pezizomycotina</taxon>
        <taxon>Sordariomycetes</taxon>
        <taxon>Hypocreomycetidae</taxon>
        <taxon>Hypocreales</taxon>
        <taxon>Hypocreaceae</taxon>
        <taxon>Trichoderma</taxon>
    </lineage>
</organism>
<feature type="signal peptide" evidence="4">
    <location>
        <begin position="1"/>
        <end position="21"/>
    </location>
</feature>
<feature type="chain" id="PRO_0000008032" description="AA9 family lytic polysaccharide monooxygenase cel61A">
    <location>
        <begin position="22"/>
        <end position="344"/>
    </location>
</feature>
<feature type="domain" description="CBM1" evidence="5">
    <location>
        <begin position="307"/>
        <end position="343"/>
    </location>
</feature>
<feature type="region of interest" description="Disordered" evidence="6">
    <location>
        <begin position="262"/>
        <end position="310"/>
    </location>
</feature>
<feature type="compositionally biased region" description="Low complexity" evidence="6">
    <location>
        <begin position="275"/>
        <end position="310"/>
    </location>
</feature>
<feature type="binding site" evidence="3">
    <location>
        <position position="22"/>
    </location>
    <ligand>
        <name>Cu(2+)</name>
        <dbReference type="ChEBI" id="CHEBI:29036"/>
        <note>catalytic</note>
    </ligand>
</feature>
<feature type="binding site" evidence="3">
    <location>
        <position position="107"/>
    </location>
    <ligand>
        <name>Cu(2+)</name>
        <dbReference type="ChEBI" id="CHEBI:29036"/>
        <note>catalytic</note>
    </ligand>
</feature>
<feature type="binding site" evidence="2">
    <location>
        <position position="184"/>
    </location>
    <ligand>
        <name>O2</name>
        <dbReference type="ChEBI" id="CHEBI:15379"/>
    </ligand>
</feature>
<feature type="binding site" evidence="2">
    <location>
        <position position="193"/>
    </location>
    <ligand>
        <name>O2</name>
        <dbReference type="ChEBI" id="CHEBI:15379"/>
    </ligand>
</feature>
<feature type="binding site" evidence="3">
    <location>
        <position position="195"/>
    </location>
    <ligand>
        <name>Cu(2+)</name>
        <dbReference type="ChEBI" id="CHEBI:29036"/>
        <note>catalytic</note>
    </ligand>
</feature>
<feature type="glycosylation site" description="N-linked (GlcNAc...) asparagine" evidence="4">
    <location>
        <position position="80"/>
    </location>
</feature>
<feature type="glycosylation site" description="N-linked (GlcNAc...) asparagine" evidence="4">
    <location>
        <position position="158"/>
    </location>
</feature>
<feature type="disulfide bond" evidence="3">
    <location>
        <begin position="77"/>
        <end position="198"/>
    </location>
</feature>
<feature type="disulfide bond" evidence="3">
    <location>
        <begin position="118"/>
        <end position="122"/>
    </location>
</feature>
<protein>
    <recommendedName>
        <fullName evidence="10">AA9 family lytic polysaccharide monooxygenase cel61A</fullName>
        <shortName evidence="10">LPMO9 cel61A</shortName>
        <ecNumber evidence="7 9">1.14.99.56</ecNumber>
    </recommendedName>
    <alternativeName>
        <fullName evidence="11">Cellulase-61A</fullName>
        <shortName evidence="11">Cel61A</shortName>
    </alternativeName>
    <alternativeName>
        <fullName evidence="10">Endo-beta-1,4-glucanase cel61A</fullName>
        <shortName evidence="10">Endoglucanase cel61A</shortName>
    </alternativeName>
    <alternativeName>
        <fullName evidence="11">Endoglucanase IV</fullName>
    </alternativeName>
    <alternativeName>
        <fullName evidence="12">Glycosyl hydrolase 61 family protein cel61A</fullName>
    </alternativeName>
</protein>
<comment type="function">
    <text evidence="7 9 12">Lytic polysaccharide monooxygenase (LPMO) that depolymerizes crystalline and amorphous polysaccharides via the oxidation of scissile alpha- or beta-(1-4)-glycosidic bonds, yielding C1 or C4 oxidation products (PubMed:11737205, PubMed:9370370). Catalysis by LPMOs requires the reduction of the active-site copper from Cu(II) to Cu(I) by a reducing agent and H(2)O(2) or O(2) as a cosubstrate (Probable). Shows activity on beta-glucan and amorphous cellulose (PubMed:11737205, PubMed:9370370). Does not show beta-1-3-glucanase, beta-1,6-glucanase, mannanase, xylanase, beta-1,3-galactosidase, amylase, pectinase, nor chitinase activities (PubMed:11737205).</text>
</comment>
<comment type="catalytic activity">
    <reaction evidence="7 9">
        <text>[(1-&gt;4)-beta-D-glucosyl]n+m + reduced acceptor + O2 = 4-dehydro-beta-D-glucosyl-[(1-&gt;4)-beta-D-glucosyl]n-1 + [(1-&gt;4)-beta-D-glucosyl]m + acceptor + H2O.</text>
        <dbReference type="EC" id="1.14.99.56"/>
    </reaction>
</comment>
<comment type="cofactor">
    <cofactor evidence="1">
        <name>Cu(2+)</name>
        <dbReference type="ChEBI" id="CHEBI:29036"/>
    </cofactor>
    <text evidence="1">Binds 1 copper ion per subunit.</text>
</comment>
<comment type="subcellular location">
    <subcellularLocation>
        <location evidence="13">Secreted</location>
    </subcellularLocation>
</comment>
<comment type="induction">
    <text evidence="8 9">Expression is induced in the presence of cellulose, cellobiose, lactose and sophorose.</text>
</comment>
<comment type="domain">
    <text evidence="9">Has a modular structure: an endo-beta-1,4-glucanase catalytic module at the N-terminus, a linker rich in serines and threonines, and a C-terminal carbohydrate-binding module (CBM). The linker forms an integral part of the catalytic domain structure, covering a hydrophobic patch on the catalytic module. The CBM domain is essential for binding to and subsequent oxidative degradation of polysaccharide substrate.</text>
</comment>
<comment type="biotechnology">
    <text evidence="1">Lignocellulose is the most abundant polymeric composite on Earth and is a recalcitrant but promising renewable substrate for industrial biotechnology applications. Together with cellobiose dehydrogenases (CDHs) an enzymatic system capable of oxidative cellulose cleavage is formed, which increases the efficiency of cellulases and put LPMOs at focus of biofuel research.</text>
</comment>
<comment type="similarity">
    <text evidence="12">Belongs to the polysaccharide monooxygenase AA9 family.</text>
</comment>
<sequence length="344" mass="35511">MIQKLSNLLVTALAVATGVVGHGHINDIVINGVWYQAYDPTTFPYESNPPIVVGWTAADLDNGFVSPDAYQNPDIICHKNATNAKGHASVKAGDTILFQWVPVPWPHPGPIVDYLANCNGDCETVDKTTLEFFKIDGVGLLSGGDPGTWASDVLISNNNTWVVKIPDNLAPGNYVLRHEIIALHSAGQANGAQNYPQCFNIAVSGSGSLQPSGVLGTDLYHATDPGVLINIYTSPLNYIIPGPTVVSGLPTSVAQGSSAATATASATVPGGGSGPTSRTTTTARTTQASSRPSSTPPATTSAPAGGPTQTLYGQCGGSGYSGPTRCAPPATCSTLNPYYAQCLN</sequence>
<proteinExistence type="evidence at protein level"/>
<keyword id="KW-0119">Carbohydrate metabolism</keyword>
<keyword id="KW-0136">Cellulose degradation</keyword>
<keyword id="KW-0186">Copper</keyword>
<keyword id="KW-1015">Disulfide bond</keyword>
<keyword id="KW-0325">Glycoprotein</keyword>
<keyword id="KW-0479">Metal-binding</keyword>
<keyword id="KW-0503">Monooxygenase</keyword>
<keyword id="KW-0560">Oxidoreductase</keyword>
<keyword id="KW-0624">Polysaccharide degradation</keyword>
<keyword id="KW-0964">Secreted</keyword>
<keyword id="KW-0732">Signal</keyword>
<name>LP9A_HYPJE</name>
<dbReference type="EC" id="1.14.99.56" evidence="7 9"/>
<dbReference type="EMBL" id="Y11113">
    <property type="protein sequence ID" value="CAA71999.1"/>
    <property type="molecule type" value="mRNA"/>
</dbReference>
<dbReference type="SMR" id="O14405"/>
<dbReference type="CAZy" id="AA9">
    <property type="family name" value="Auxiliary Activities 9"/>
</dbReference>
<dbReference type="CAZy" id="CBM1">
    <property type="family name" value="Carbohydrate-Binding Module Family 1"/>
</dbReference>
<dbReference type="GlyCosmos" id="O14405">
    <property type="glycosylation" value="2 sites, No reported glycans"/>
</dbReference>
<dbReference type="VEuPathDB" id="FungiDB:TrQ_007365"/>
<dbReference type="OMA" id="HGHVTNV"/>
<dbReference type="BioCyc" id="MetaCyc:MONOMER-16504"/>
<dbReference type="BRENDA" id="1.14.99.54">
    <property type="organism ID" value="6451"/>
</dbReference>
<dbReference type="BRENDA" id="1.14.99.56">
    <property type="organism ID" value="6451"/>
</dbReference>
<dbReference type="GO" id="GO:0005576">
    <property type="term" value="C:extracellular region"/>
    <property type="evidence" value="ECO:0000314"/>
    <property type="project" value="UniProtKB"/>
</dbReference>
<dbReference type="GO" id="GO:0008810">
    <property type="term" value="F:cellulase activity"/>
    <property type="evidence" value="ECO:0000314"/>
    <property type="project" value="UniProtKB"/>
</dbReference>
<dbReference type="GO" id="GO:0030248">
    <property type="term" value="F:cellulose binding"/>
    <property type="evidence" value="ECO:0007669"/>
    <property type="project" value="InterPro"/>
</dbReference>
<dbReference type="GO" id="GO:0046872">
    <property type="term" value="F:metal ion binding"/>
    <property type="evidence" value="ECO:0007669"/>
    <property type="project" value="UniProtKB-KW"/>
</dbReference>
<dbReference type="GO" id="GO:0004497">
    <property type="term" value="F:monooxygenase activity"/>
    <property type="evidence" value="ECO:0007669"/>
    <property type="project" value="UniProtKB-KW"/>
</dbReference>
<dbReference type="GO" id="GO:0030245">
    <property type="term" value="P:cellulose catabolic process"/>
    <property type="evidence" value="ECO:0000314"/>
    <property type="project" value="UniProtKB"/>
</dbReference>
<dbReference type="CDD" id="cd21175">
    <property type="entry name" value="LPMO_AA9"/>
    <property type="match status" value="1"/>
</dbReference>
<dbReference type="FunFam" id="2.70.50.70:FF:000001">
    <property type="entry name" value="Glycoside hydrolase family 61"/>
    <property type="match status" value="1"/>
</dbReference>
<dbReference type="Gene3D" id="2.70.50.70">
    <property type="match status" value="1"/>
</dbReference>
<dbReference type="InterPro" id="IPR049892">
    <property type="entry name" value="AA9"/>
</dbReference>
<dbReference type="InterPro" id="IPR005103">
    <property type="entry name" value="AA9_LPMO"/>
</dbReference>
<dbReference type="InterPro" id="IPR035971">
    <property type="entry name" value="CBD_sf"/>
</dbReference>
<dbReference type="InterPro" id="IPR000254">
    <property type="entry name" value="Cellulose-bd_dom_fun"/>
</dbReference>
<dbReference type="PANTHER" id="PTHR33353:SF36">
    <property type="entry name" value="ENDO-BETA-1,4-GLUCANASE D"/>
    <property type="match status" value="1"/>
</dbReference>
<dbReference type="PANTHER" id="PTHR33353">
    <property type="entry name" value="PUTATIVE (AFU_ORTHOLOGUE AFUA_1G12560)-RELATED"/>
    <property type="match status" value="1"/>
</dbReference>
<dbReference type="Pfam" id="PF03443">
    <property type="entry name" value="AA9"/>
    <property type="match status" value="1"/>
</dbReference>
<dbReference type="Pfam" id="PF00734">
    <property type="entry name" value="CBM_1"/>
    <property type="match status" value="1"/>
</dbReference>
<dbReference type="SMART" id="SM00236">
    <property type="entry name" value="fCBD"/>
    <property type="match status" value="1"/>
</dbReference>
<dbReference type="SUPFAM" id="SSF57180">
    <property type="entry name" value="Cellulose-binding domain"/>
    <property type="match status" value="1"/>
</dbReference>
<dbReference type="PROSITE" id="PS00562">
    <property type="entry name" value="CBM1_1"/>
    <property type="match status" value="1"/>
</dbReference>
<dbReference type="PROSITE" id="PS51164">
    <property type="entry name" value="CBM1_2"/>
    <property type="match status" value="1"/>
</dbReference>
<accession>O14405</accession>
<evidence type="ECO:0000250" key="1">
    <source>
        <dbReference type="UniProtKB" id="G0R6T8"/>
    </source>
</evidence>
<evidence type="ECO:0000250" key="2">
    <source>
        <dbReference type="UniProtKB" id="Q1K8B6"/>
    </source>
</evidence>
<evidence type="ECO:0000250" key="3">
    <source>
        <dbReference type="UniProtKB" id="Q4WP32"/>
    </source>
</evidence>
<evidence type="ECO:0000255" key="4"/>
<evidence type="ECO:0000255" key="5">
    <source>
        <dbReference type="PROSITE-ProRule" id="PRU00597"/>
    </source>
</evidence>
<evidence type="ECO:0000256" key="6">
    <source>
        <dbReference type="SAM" id="MobiDB-lite"/>
    </source>
</evidence>
<evidence type="ECO:0000269" key="7">
    <source>
    </source>
</evidence>
<evidence type="ECO:0000269" key="8">
    <source>
    </source>
</evidence>
<evidence type="ECO:0000269" key="9">
    <source>
    </source>
</evidence>
<evidence type="ECO:0000303" key="10">
    <source>
    </source>
</evidence>
<evidence type="ECO:0000303" key="11">
    <source>
    </source>
</evidence>
<evidence type="ECO:0000305" key="12"/>
<evidence type="ECO:0000305" key="13">
    <source>
    </source>
</evidence>